<sequence length="271" mass="29714">MNTPEDSTLGREVAYPSGYDPSLLFPIPRAAGREAIGLTGALPFTGRDRWHAYELSWLDAHGKPCVATATLHVPHDSPALIESKSLKLYLNSLNATRFNSAEAVRTRIVTDLSTRAGADVSVEFGLPPIDGVGDGESIDALDVSIDDYGPPNAAYLTAQAQPVVEEVLTSALLKSNCPVTGQPDWASVTLHYRGAPIEREGLLRYLVSFRDHAEFHEQCVERIFHDVLLRCAPEWLVVEARYTRRGGLDINPLRSSLSVPAPLSVFRDLRQ</sequence>
<comment type="function">
    <text evidence="1">Catalyzes the NADPH-dependent reduction of 7-cyano-7-deazaguanine (preQ0) to 7-aminomethyl-7-deazaguanine (preQ1).</text>
</comment>
<comment type="catalytic activity">
    <reaction evidence="1">
        <text>7-aminomethyl-7-carbaguanine + 2 NADP(+) = 7-cyano-7-deazaguanine + 2 NADPH + 3 H(+)</text>
        <dbReference type="Rhea" id="RHEA:13409"/>
        <dbReference type="ChEBI" id="CHEBI:15378"/>
        <dbReference type="ChEBI" id="CHEBI:45075"/>
        <dbReference type="ChEBI" id="CHEBI:57783"/>
        <dbReference type="ChEBI" id="CHEBI:58349"/>
        <dbReference type="ChEBI" id="CHEBI:58703"/>
        <dbReference type="EC" id="1.7.1.13"/>
    </reaction>
</comment>
<comment type="pathway">
    <text evidence="1">tRNA modification; tRNA-queuosine biosynthesis.</text>
</comment>
<comment type="subunit">
    <text evidence="1">Homodimer.</text>
</comment>
<comment type="subcellular location">
    <subcellularLocation>
        <location evidence="1">Cytoplasm</location>
    </subcellularLocation>
</comment>
<comment type="similarity">
    <text evidence="1">Belongs to the GTP cyclohydrolase I family. QueF type 2 subfamily.</text>
</comment>
<feature type="chain" id="PRO_0000163070" description="NADPH-dependent 7-cyano-7-deazaguanine reductase">
    <location>
        <begin position="1"/>
        <end position="271"/>
    </location>
</feature>
<feature type="active site" description="Thioimide intermediate" evidence="1">
    <location>
        <position position="177"/>
    </location>
</feature>
<feature type="active site" description="Proton donor" evidence="1">
    <location>
        <position position="184"/>
    </location>
</feature>
<feature type="binding site" evidence="1">
    <location>
        <begin position="81"/>
        <end position="83"/>
    </location>
    <ligand>
        <name>substrate</name>
    </ligand>
</feature>
<feature type="binding site" evidence="1">
    <location>
        <begin position="83"/>
        <end position="84"/>
    </location>
    <ligand>
        <name>NADPH</name>
        <dbReference type="ChEBI" id="CHEBI:57783"/>
    </ligand>
</feature>
<feature type="binding site" evidence="1">
    <location>
        <begin position="216"/>
        <end position="217"/>
    </location>
    <ligand>
        <name>substrate</name>
    </ligand>
</feature>
<feature type="binding site" evidence="1">
    <location>
        <begin position="245"/>
        <end position="246"/>
    </location>
    <ligand>
        <name>NADPH</name>
        <dbReference type="ChEBI" id="CHEBI:57783"/>
    </ligand>
</feature>
<gene>
    <name evidence="1" type="primary">queF</name>
    <name type="ordered locus">XOO4185</name>
</gene>
<reference key="1">
    <citation type="journal article" date="2005" name="Nucleic Acids Res.">
        <title>The genome sequence of Xanthomonas oryzae pathovar oryzae KACC10331, the bacterial blight pathogen of rice.</title>
        <authorList>
            <person name="Lee B.-M."/>
            <person name="Park Y.-J."/>
            <person name="Park D.-S."/>
            <person name="Kang H.-W."/>
            <person name="Kim J.-G."/>
            <person name="Song E.-S."/>
            <person name="Park I.-C."/>
            <person name="Yoon U.-H."/>
            <person name="Hahn J.-H."/>
            <person name="Koo B.-S."/>
            <person name="Lee G.-B."/>
            <person name="Kim H."/>
            <person name="Park H.-S."/>
            <person name="Yoon K.-O."/>
            <person name="Kim J.-H."/>
            <person name="Jung C.-H."/>
            <person name="Koh N.-H."/>
            <person name="Seo J.-S."/>
            <person name="Go S.-J."/>
        </authorList>
    </citation>
    <scope>NUCLEOTIDE SEQUENCE [LARGE SCALE GENOMIC DNA]</scope>
    <source>
        <strain>KACC10331 / KXO85</strain>
    </source>
</reference>
<protein>
    <recommendedName>
        <fullName evidence="1">NADPH-dependent 7-cyano-7-deazaguanine reductase</fullName>
        <ecNumber evidence="1">1.7.1.13</ecNumber>
    </recommendedName>
    <alternativeName>
        <fullName evidence="1">7-cyano-7-carbaguanine reductase</fullName>
    </alternativeName>
    <alternativeName>
        <fullName evidence="1">NADPH-dependent nitrile oxidoreductase</fullName>
    </alternativeName>
    <alternativeName>
        <fullName evidence="1">PreQ(0) reductase</fullName>
    </alternativeName>
</protein>
<dbReference type="EC" id="1.7.1.13" evidence="1"/>
<dbReference type="EMBL" id="AE013598">
    <property type="protein sequence ID" value="AAW77439.1"/>
    <property type="molecule type" value="Genomic_DNA"/>
</dbReference>
<dbReference type="SMR" id="Q5GV34"/>
<dbReference type="STRING" id="291331.XOO4185"/>
<dbReference type="KEGG" id="xoo:XOO4185"/>
<dbReference type="HOGENOM" id="CLU_054738_0_0_6"/>
<dbReference type="UniPathway" id="UPA00392"/>
<dbReference type="Proteomes" id="UP000006735">
    <property type="component" value="Chromosome"/>
</dbReference>
<dbReference type="GO" id="GO:0005737">
    <property type="term" value="C:cytoplasm"/>
    <property type="evidence" value="ECO:0007669"/>
    <property type="project" value="UniProtKB-SubCell"/>
</dbReference>
<dbReference type="GO" id="GO:0033739">
    <property type="term" value="F:preQ1 synthase activity"/>
    <property type="evidence" value="ECO:0007669"/>
    <property type="project" value="UniProtKB-UniRule"/>
</dbReference>
<dbReference type="GO" id="GO:0008616">
    <property type="term" value="P:queuosine biosynthetic process"/>
    <property type="evidence" value="ECO:0007669"/>
    <property type="project" value="UniProtKB-UniRule"/>
</dbReference>
<dbReference type="GO" id="GO:0006400">
    <property type="term" value="P:tRNA modification"/>
    <property type="evidence" value="ECO:0007669"/>
    <property type="project" value="UniProtKB-UniRule"/>
</dbReference>
<dbReference type="Gene3D" id="3.30.1130.10">
    <property type="match status" value="2"/>
</dbReference>
<dbReference type="HAMAP" id="MF_00817">
    <property type="entry name" value="QueF_type2"/>
    <property type="match status" value="1"/>
</dbReference>
<dbReference type="InterPro" id="IPR043133">
    <property type="entry name" value="GTP-CH-I_C/QueF"/>
</dbReference>
<dbReference type="InterPro" id="IPR050084">
    <property type="entry name" value="NADPH_dep_7-cyano-7-deazaG_red"/>
</dbReference>
<dbReference type="InterPro" id="IPR029500">
    <property type="entry name" value="QueF"/>
</dbReference>
<dbReference type="InterPro" id="IPR029139">
    <property type="entry name" value="QueF_N"/>
</dbReference>
<dbReference type="InterPro" id="IPR016428">
    <property type="entry name" value="QueF_type2"/>
</dbReference>
<dbReference type="NCBIfam" id="TIGR03138">
    <property type="entry name" value="QueF"/>
    <property type="match status" value="1"/>
</dbReference>
<dbReference type="PANTHER" id="PTHR34354">
    <property type="entry name" value="NADPH-DEPENDENT 7-CYANO-7-DEAZAGUANINE REDUCTASE"/>
    <property type="match status" value="1"/>
</dbReference>
<dbReference type="PANTHER" id="PTHR34354:SF1">
    <property type="entry name" value="NADPH-DEPENDENT 7-CYANO-7-DEAZAGUANINE REDUCTASE"/>
    <property type="match status" value="1"/>
</dbReference>
<dbReference type="Pfam" id="PF14489">
    <property type="entry name" value="QueF"/>
    <property type="match status" value="1"/>
</dbReference>
<dbReference type="Pfam" id="PF14819">
    <property type="entry name" value="QueF_N"/>
    <property type="match status" value="1"/>
</dbReference>
<dbReference type="PIRSF" id="PIRSF004750">
    <property type="entry name" value="Nitrile_oxidored_YqcD_prd"/>
    <property type="match status" value="1"/>
</dbReference>
<dbReference type="SUPFAM" id="SSF55620">
    <property type="entry name" value="Tetrahydrobiopterin biosynthesis enzymes-like"/>
    <property type="match status" value="1"/>
</dbReference>
<evidence type="ECO:0000255" key="1">
    <source>
        <dbReference type="HAMAP-Rule" id="MF_00817"/>
    </source>
</evidence>
<organism>
    <name type="scientific">Xanthomonas oryzae pv. oryzae (strain KACC10331 / KXO85)</name>
    <dbReference type="NCBI Taxonomy" id="291331"/>
    <lineage>
        <taxon>Bacteria</taxon>
        <taxon>Pseudomonadati</taxon>
        <taxon>Pseudomonadota</taxon>
        <taxon>Gammaproteobacteria</taxon>
        <taxon>Lysobacterales</taxon>
        <taxon>Lysobacteraceae</taxon>
        <taxon>Xanthomonas</taxon>
    </lineage>
</organism>
<name>QUEF_XANOR</name>
<accession>Q5GV34</accession>
<proteinExistence type="inferred from homology"/>
<keyword id="KW-0963">Cytoplasm</keyword>
<keyword id="KW-0521">NADP</keyword>
<keyword id="KW-0560">Oxidoreductase</keyword>
<keyword id="KW-0671">Queuosine biosynthesis</keyword>
<keyword id="KW-1185">Reference proteome</keyword>